<feature type="signal peptide" evidence="1">
    <location>
        <begin position="1"/>
        <end position="20"/>
    </location>
</feature>
<feature type="chain" id="PRO_0000413026" description="Insoluble matrix shell protein 2" evidence="1">
    <location>
        <begin position="21"/>
        <end position="120"/>
    </location>
</feature>
<comment type="subcellular location">
    <subcellularLocation>
        <location evidence="2">Secreted</location>
    </subcellularLocation>
</comment>
<comment type="tissue specificity">
    <text evidence="2">Component of the acid-insoluble organic matrix of the calcified shell.</text>
</comment>
<proteinExistence type="evidence at protein level"/>
<protein>
    <recommendedName>
        <fullName evidence="3">Insoluble matrix shell protein 2</fullName>
        <shortName evidence="3">IMSP2</shortName>
    </recommendedName>
</protein>
<keyword id="KW-0903">Direct protein sequencing</keyword>
<keyword id="KW-0964">Secreted</keyword>
<keyword id="KW-0732">Signal</keyword>
<name>IMSP2_RUDPH</name>
<accession>P86983</accession>
<evidence type="ECO:0000255" key="1"/>
<evidence type="ECO:0000269" key="2">
    <source>
    </source>
</evidence>
<evidence type="ECO:0000303" key="3">
    <source>
    </source>
</evidence>
<evidence type="ECO:0000305" key="4"/>
<dbReference type="EMBL" id="AM876908">
    <property type="status" value="NOT_ANNOTATED_CDS"/>
    <property type="molecule type" value="mRNA"/>
</dbReference>
<dbReference type="RefSeq" id="XP_060579374.1">
    <property type="nucleotide sequence ID" value="XM_060723391.1"/>
</dbReference>
<dbReference type="GeneID" id="132736289"/>
<dbReference type="GO" id="GO:0005576">
    <property type="term" value="C:extracellular region"/>
    <property type="evidence" value="ECO:0007669"/>
    <property type="project" value="UniProtKB-SubCell"/>
</dbReference>
<sequence length="120" mass="13830">MHQSSLGVLVLFSLIYLCISVHVPFDLNGWKALRLDNNRVQDSTNLAVEHLAGQLKQPITAFKLEENIPNWDLYRVSFIGTYFKGEEYECHSDVVWIFNPFNVTVFNTGCLPTSQLNFKY</sequence>
<organism>
    <name type="scientific">Ruditapes philippinarum</name>
    <name type="common">Japanese carpet shell</name>
    <name type="synonym">Venerupis philippinarum</name>
    <dbReference type="NCBI Taxonomy" id="129788"/>
    <lineage>
        <taxon>Eukaryota</taxon>
        <taxon>Metazoa</taxon>
        <taxon>Spiralia</taxon>
        <taxon>Lophotrochozoa</taxon>
        <taxon>Mollusca</taxon>
        <taxon>Bivalvia</taxon>
        <taxon>Autobranchia</taxon>
        <taxon>Heteroconchia</taxon>
        <taxon>Euheterodonta</taxon>
        <taxon>Imparidentia</taxon>
        <taxon>Neoheterodontei</taxon>
        <taxon>Venerida</taxon>
        <taxon>Veneroidea</taxon>
        <taxon>Veneridae</taxon>
        <taxon>Ruditapes</taxon>
    </lineage>
</organism>
<reference evidence="4" key="1">
    <citation type="submission" date="2007-09" db="EMBL/GenBank/DDBJ databases">
        <authorList>
            <person name="Beck A."/>
        </authorList>
    </citation>
    <scope>NUCLEOTIDE SEQUENCE [MRNA]</scope>
</reference>
<reference evidence="4" key="2">
    <citation type="journal article" date="2011" name="Mar. Biotechnol.">
        <title>Proteomic identification of novel proteins from the calcifying shell matrix of the manila clam Venerupis Philippinarum.</title>
        <authorList>
            <person name="Marie B."/>
            <person name="Trinkler N."/>
            <person name="Zanella-Cleon I."/>
            <person name="Guichard N."/>
            <person name="Becchi M."/>
            <person name="Paillard C."/>
            <person name="Marin F."/>
        </authorList>
    </citation>
    <scope>PROTEIN SEQUENCE OF 40-63 AND 76-84</scope>
    <source>
        <tissue evidence="2">Shell</tissue>
    </source>
</reference>